<comment type="subcellular location">
    <subcellularLocation>
        <location evidence="1">Cell membrane</location>
        <topology evidence="1">Lipid-anchor</topology>
    </subcellularLocation>
</comment>
<comment type="similarity">
    <text evidence="2">Belongs to the outer membrane factor (OMF) (TC 1.B.17) family.</text>
</comment>
<sequence length="467" mass="50344">MRFTRYTTPFFSLLLSGCVVGPNYAPPEMPLPAKFSEGGVTSNGDVTVVAWWTAFNDPMLTSYVEQGISQNLDVQQAIERIDLAAANVTIAEASALPDLTLSGSHTVSGQKGKLRKQTYTSNTSTGELSLSWLLDFGVYKRNTESAEAALDAAYASVDMAKLAFINDIISSYVDARYYQRRLALSQANLKSRRETFELTKSKFAAGAVARMDVVRAEGLVQSTLAEIPSLDANFRISAHRIATLLGKPAGSMVEEIAKGSNQPAFRADVNVGIPADIIRNRPDIRKAERDLADSTAQIGVAEAKLFPSITLSGSISPSGGINERGVYGNLTPWSFGPKLKLPILDGGGLRADVDSAKSKATVSYLKWKSRVLNAIEQVENALVAMQREGRTVRALKREVEIAQETLRLSTSSYKDGASSLLDLLEAQRSLSVTQASLARAVQEWAKLYAVLNIAIGSGYNPVAKAGL</sequence>
<proteinExistence type="inferred from homology"/>
<feature type="signal peptide" evidence="1">
    <location>
        <begin position="1"/>
        <end position="17"/>
    </location>
</feature>
<feature type="chain" id="PRO_0000030996" description="Nodulation protein T">
    <location>
        <begin position="18"/>
        <end position="467"/>
    </location>
</feature>
<feature type="lipid moiety-binding region" description="N-palmitoyl cysteine" evidence="1">
    <location>
        <position position="18"/>
    </location>
</feature>
<feature type="lipid moiety-binding region" description="S-diacylglycerol cysteine" evidence="1">
    <location>
        <position position="18"/>
    </location>
</feature>
<reference key="1">
    <citation type="journal article" date="1990" name="Mol. Microbiol.">
        <title>Molecular characterization of the nodulation gene, nodT, from two biovars of Rhizobium leguminosarum.</title>
        <authorList>
            <person name="Surin B.P."/>
            <person name="Watson J.M."/>
            <person name="Hamilton W.D.O."/>
            <person name="Economou A."/>
            <person name="Downie J.A."/>
        </authorList>
    </citation>
    <scope>NUCLEOTIDE SEQUENCE [GENOMIC DNA]</scope>
    <source>
        <strain>ANU 843</strain>
    </source>
</reference>
<reference key="2">
    <citation type="journal article" date="1989" name="Mol. Microbiol.">
        <title>Molecular linkage of the nif/fix and nod gene regions in Rhizobium leguminosarum biovar trifolii.</title>
        <authorList>
            <person name="Iismaa S.E."/>
            <person name="Ealing P.M."/>
            <person name="Scott K.F."/>
            <person name="Watson J.M."/>
        </authorList>
    </citation>
    <scope>NUCLEOTIDE SEQUENCE [GENOMIC DNA] OF 452-467</scope>
    <source>
        <strain>ANU 843</strain>
    </source>
</reference>
<gene>
    <name type="primary">nodT</name>
</gene>
<protein>
    <recommendedName>
        <fullName>Nodulation protein T</fullName>
    </recommendedName>
</protein>
<organism>
    <name type="scientific">Rhizobium leguminosarum bv. trifolii</name>
    <dbReference type="NCBI Taxonomy" id="386"/>
    <lineage>
        <taxon>Bacteria</taxon>
        <taxon>Pseudomonadati</taxon>
        <taxon>Pseudomonadota</taxon>
        <taxon>Alphaproteobacteria</taxon>
        <taxon>Hyphomicrobiales</taxon>
        <taxon>Rhizobiaceae</taxon>
        <taxon>Rhizobium/Agrobacterium group</taxon>
        <taxon>Rhizobium</taxon>
    </lineage>
</organism>
<dbReference type="EMBL" id="X51411">
    <property type="protein sequence ID" value="CAA35773.1"/>
    <property type="molecule type" value="Genomic_DNA"/>
</dbReference>
<dbReference type="EMBL" id="X51963">
    <property type="status" value="NOT_ANNOTATED_CDS"/>
    <property type="molecule type" value="Genomic_DNA"/>
</dbReference>
<dbReference type="PIR" id="S08618">
    <property type="entry name" value="S08618"/>
</dbReference>
<dbReference type="SMR" id="P24145"/>
<dbReference type="TCDB" id="1.B.17.3.1">
    <property type="family name" value="the outer membrane factor (omf) family"/>
</dbReference>
<dbReference type="GO" id="GO:0005886">
    <property type="term" value="C:plasma membrane"/>
    <property type="evidence" value="ECO:0007669"/>
    <property type="project" value="UniProtKB-SubCell"/>
</dbReference>
<dbReference type="GO" id="GO:0015562">
    <property type="term" value="F:efflux transmembrane transporter activity"/>
    <property type="evidence" value="ECO:0007669"/>
    <property type="project" value="InterPro"/>
</dbReference>
<dbReference type="Gene3D" id="1.20.1600.10">
    <property type="entry name" value="Outer membrane efflux proteins (OEP)"/>
    <property type="match status" value="1"/>
</dbReference>
<dbReference type="Gene3D" id="2.20.200.10">
    <property type="entry name" value="Outer membrane efflux proteins (OEP)"/>
    <property type="match status" value="1"/>
</dbReference>
<dbReference type="InterPro" id="IPR050737">
    <property type="entry name" value="OMF"/>
</dbReference>
<dbReference type="InterPro" id="IPR003423">
    <property type="entry name" value="OMP_efflux"/>
</dbReference>
<dbReference type="InterPro" id="IPR010131">
    <property type="entry name" value="RND_efflux_OM_lipoprot_NodT"/>
</dbReference>
<dbReference type="NCBIfam" id="TIGR01845">
    <property type="entry name" value="outer_NodT"/>
    <property type="match status" value="1"/>
</dbReference>
<dbReference type="PANTHER" id="PTHR30203">
    <property type="entry name" value="OUTER MEMBRANE CATION EFFLUX PROTEIN"/>
    <property type="match status" value="1"/>
</dbReference>
<dbReference type="Pfam" id="PF02321">
    <property type="entry name" value="OEP"/>
    <property type="match status" value="2"/>
</dbReference>
<dbReference type="SUPFAM" id="SSF56954">
    <property type="entry name" value="Outer membrane efflux proteins (OEP)"/>
    <property type="match status" value="1"/>
</dbReference>
<dbReference type="PROSITE" id="PS51257">
    <property type="entry name" value="PROKAR_LIPOPROTEIN"/>
    <property type="match status" value="1"/>
</dbReference>
<evidence type="ECO:0000255" key="1">
    <source>
        <dbReference type="PROSITE-ProRule" id="PRU00303"/>
    </source>
</evidence>
<evidence type="ECO:0000305" key="2"/>
<geneLocation type="plasmid">
    <name>sym pRtr843e</name>
</geneLocation>
<keyword id="KW-1003">Cell membrane</keyword>
<keyword id="KW-0449">Lipoprotein</keyword>
<keyword id="KW-0472">Membrane</keyword>
<keyword id="KW-0536">Nodulation</keyword>
<keyword id="KW-0564">Palmitate</keyword>
<keyword id="KW-0614">Plasmid</keyword>
<keyword id="KW-0732">Signal</keyword>
<keyword id="KW-0812">Transmembrane</keyword>
<keyword id="KW-1134">Transmembrane beta strand</keyword>
<name>NODT_RHILT</name>
<accession>P24145</accession>